<proteinExistence type="predicted"/>
<evidence type="ECO:0000255" key="1"/>
<evidence type="ECO:0000305" key="2"/>
<gene>
    <name type="ordered locus">pXO2-18</name>
    <name type="ordered locus">BXB0017</name>
    <name type="ordered locus">GBAA_pXO2_0017</name>
</gene>
<protein>
    <recommendedName>
        <fullName>Uncharacterized protein pXO2-18/BXB0017/GBAA_pXO2_0017</fullName>
    </recommendedName>
</protein>
<geneLocation type="plasmid">
    <name>pXO2</name>
</geneLocation>
<comment type="subcellular location">
    <subcellularLocation>
        <location evidence="2">Cell membrane</location>
        <topology evidence="2">Multi-pass membrane protein</topology>
    </subcellularLocation>
</comment>
<reference key="1">
    <citation type="journal article" date="1999" name="J. Appl. Microbiol.">
        <title>Sequence, assembly and analysis of pXO1 and pXO2.</title>
        <authorList>
            <person name="Okinaka R.T."/>
            <person name="Cloud K."/>
            <person name="Hampton O."/>
            <person name="Hoffmaster A."/>
            <person name="Hill K.K."/>
            <person name="Keim P."/>
            <person name="Koehler T."/>
            <person name="Lamke G."/>
            <person name="Kumano S."/>
            <person name="Manter D."/>
            <person name="Martinez Y."/>
            <person name="Ricke D."/>
            <person name="Svensson R."/>
            <person name="Jackson P.J."/>
        </authorList>
    </citation>
    <scope>NUCLEOTIDE SEQUENCE [GENOMIC DNA]</scope>
    <source>
        <strain>Pasteur</strain>
    </source>
</reference>
<reference key="2">
    <citation type="journal article" date="2002" name="Science">
        <title>Comparative genome sequencing for discovery of novel polymorphisms in Bacillus anthracis.</title>
        <authorList>
            <person name="Read T.D."/>
            <person name="Salzberg S.L."/>
            <person name="Pop M."/>
            <person name="Shumway M.F."/>
            <person name="Umayam L."/>
            <person name="Jiang L."/>
            <person name="Holtzapple E."/>
            <person name="Busch J.D."/>
            <person name="Smith K.L."/>
            <person name="Schupp J.M."/>
            <person name="Solomon D."/>
            <person name="Keim P."/>
            <person name="Fraser C.M."/>
        </authorList>
    </citation>
    <scope>NUCLEOTIDE SEQUENCE [GENOMIC DNA]</scope>
    <source>
        <strain>Ames / isolate Florida / A2012</strain>
    </source>
</reference>
<reference key="3">
    <citation type="journal article" date="2009" name="J. Bacteriol.">
        <title>The complete genome sequence of Bacillus anthracis Ames 'Ancestor'.</title>
        <authorList>
            <person name="Ravel J."/>
            <person name="Jiang L."/>
            <person name="Stanley S.T."/>
            <person name="Wilson M.R."/>
            <person name="Decker R.S."/>
            <person name="Read T.D."/>
            <person name="Worsham P."/>
            <person name="Keim P.S."/>
            <person name="Salzberg S.L."/>
            <person name="Fraser-Liggett C.M."/>
            <person name="Rasko D.A."/>
        </authorList>
    </citation>
    <scope>NUCLEOTIDE SEQUENCE [LARGE SCALE GENOMIC DNA]</scope>
    <source>
        <strain>Ames ancestor</strain>
    </source>
</reference>
<accession>Q9RN14</accession>
<keyword id="KW-1003">Cell membrane</keyword>
<keyword id="KW-0472">Membrane</keyword>
<keyword id="KW-0614">Plasmid</keyword>
<keyword id="KW-1185">Reference proteome</keyword>
<keyword id="KW-0812">Transmembrane</keyword>
<keyword id="KW-1133">Transmembrane helix</keyword>
<sequence>MDLFTIFAMKLLTYNDFFDSVSSALTSWTGKLQGLGIAVIIFCVCIIAFMFMFGEGPSRTAKKWLLYIVVGGVLLWGAGTFASTVQGVTAGF</sequence>
<dbReference type="EMBL" id="AF188935">
    <property type="protein sequence ID" value="AAF13623.1"/>
    <property type="molecule type" value="Genomic_DNA"/>
</dbReference>
<dbReference type="EMBL" id="AE011191">
    <property type="protein sequence ID" value="AAM26178.1"/>
    <property type="molecule type" value="Genomic_DNA"/>
</dbReference>
<dbReference type="EMBL" id="AE017335">
    <property type="protein sequence ID" value="AAT28947.2"/>
    <property type="molecule type" value="Genomic_DNA"/>
</dbReference>
<dbReference type="RefSeq" id="NP_053173.1">
    <property type="nucleotide sequence ID" value="NC_002146.1"/>
</dbReference>
<dbReference type="RefSeq" id="WP_000362954.1">
    <property type="nucleotide sequence ID" value="NZ_VTZL01000009.1"/>
</dbReference>
<dbReference type="SMR" id="Q9RN14"/>
<dbReference type="GeneID" id="45025331"/>
<dbReference type="KEGG" id="banh:HYU01_29085"/>
<dbReference type="KEGG" id="bar:GBAA_pXO2_0017"/>
<dbReference type="HOGENOM" id="CLU_186581_0_0_9"/>
<dbReference type="OMA" id="KQWLFRI"/>
<dbReference type="Proteomes" id="UP000000594">
    <property type="component" value="Plasmid pXO2"/>
</dbReference>
<dbReference type="GO" id="GO:0005886">
    <property type="term" value="C:plasma membrane"/>
    <property type="evidence" value="ECO:0007669"/>
    <property type="project" value="UniProtKB-SubCell"/>
</dbReference>
<dbReference type="InterPro" id="IPR007039">
    <property type="entry name" value="TrbC/VirB2"/>
</dbReference>
<dbReference type="Pfam" id="PF04956">
    <property type="entry name" value="TrbC"/>
    <property type="match status" value="1"/>
</dbReference>
<feature type="chain" id="PRO_0000216837" description="Uncharacterized protein pXO2-18/BXB0017/GBAA_pXO2_0017">
    <location>
        <begin position="1"/>
        <end position="92"/>
    </location>
</feature>
<feature type="transmembrane region" description="Helical" evidence="1">
    <location>
        <begin position="34"/>
        <end position="54"/>
    </location>
</feature>
<feature type="transmembrane region" description="Helical" evidence="1">
    <location>
        <begin position="65"/>
        <end position="85"/>
    </location>
</feature>
<organism>
    <name type="scientific">Bacillus anthracis</name>
    <dbReference type="NCBI Taxonomy" id="1392"/>
    <lineage>
        <taxon>Bacteria</taxon>
        <taxon>Bacillati</taxon>
        <taxon>Bacillota</taxon>
        <taxon>Bacilli</taxon>
        <taxon>Bacillales</taxon>
        <taxon>Bacillaceae</taxon>
        <taxon>Bacillus</taxon>
        <taxon>Bacillus cereus group</taxon>
    </lineage>
</organism>
<name>Y6517_BACAN</name>